<proteinExistence type="inferred from homology"/>
<accession>Q1IMI3</accession>
<gene>
    <name evidence="1" type="primary">leuC</name>
    <name type="ordered locus">Acid345_2916</name>
</gene>
<comment type="function">
    <text evidence="1">Catalyzes the isomerization between 2-isopropylmalate and 3-isopropylmalate, via the formation of 2-isopropylmaleate.</text>
</comment>
<comment type="catalytic activity">
    <reaction evidence="1">
        <text>(2R,3S)-3-isopropylmalate = (2S)-2-isopropylmalate</text>
        <dbReference type="Rhea" id="RHEA:32287"/>
        <dbReference type="ChEBI" id="CHEBI:1178"/>
        <dbReference type="ChEBI" id="CHEBI:35121"/>
        <dbReference type="EC" id="4.2.1.33"/>
    </reaction>
</comment>
<comment type="cofactor">
    <cofactor evidence="1">
        <name>[4Fe-4S] cluster</name>
        <dbReference type="ChEBI" id="CHEBI:49883"/>
    </cofactor>
    <text evidence="1">Binds 1 [4Fe-4S] cluster per subunit.</text>
</comment>
<comment type="pathway">
    <text evidence="1">Amino-acid biosynthesis; L-leucine biosynthesis; L-leucine from 3-methyl-2-oxobutanoate: step 2/4.</text>
</comment>
<comment type="subunit">
    <text evidence="1">Heterodimer of LeuC and LeuD.</text>
</comment>
<comment type="similarity">
    <text evidence="1">Belongs to the aconitase/IPM isomerase family. LeuC type 1 subfamily.</text>
</comment>
<dbReference type="EC" id="4.2.1.33" evidence="1"/>
<dbReference type="EMBL" id="CP000360">
    <property type="protein sequence ID" value="ABF41917.1"/>
    <property type="molecule type" value="Genomic_DNA"/>
</dbReference>
<dbReference type="RefSeq" id="WP_011523718.1">
    <property type="nucleotide sequence ID" value="NC_008009.1"/>
</dbReference>
<dbReference type="SMR" id="Q1IMI3"/>
<dbReference type="STRING" id="204669.Acid345_2916"/>
<dbReference type="EnsemblBacteria" id="ABF41917">
    <property type="protein sequence ID" value="ABF41917"/>
    <property type="gene ID" value="Acid345_2916"/>
</dbReference>
<dbReference type="KEGG" id="aba:Acid345_2916"/>
<dbReference type="eggNOG" id="COG0065">
    <property type="taxonomic scope" value="Bacteria"/>
</dbReference>
<dbReference type="HOGENOM" id="CLU_006714_3_4_0"/>
<dbReference type="OrthoDB" id="9802769at2"/>
<dbReference type="UniPathway" id="UPA00048">
    <property type="reaction ID" value="UER00071"/>
</dbReference>
<dbReference type="Proteomes" id="UP000002432">
    <property type="component" value="Chromosome"/>
</dbReference>
<dbReference type="GO" id="GO:0003861">
    <property type="term" value="F:3-isopropylmalate dehydratase activity"/>
    <property type="evidence" value="ECO:0007669"/>
    <property type="project" value="UniProtKB-UniRule"/>
</dbReference>
<dbReference type="GO" id="GO:0051539">
    <property type="term" value="F:4 iron, 4 sulfur cluster binding"/>
    <property type="evidence" value="ECO:0007669"/>
    <property type="project" value="UniProtKB-KW"/>
</dbReference>
<dbReference type="GO" id="GO:0046872">
    <property type="term" value="F:metal ion binding"/>
    <property type="evidence" value="ECO:0007669"/>
    <property type="project" value="UniProtKB-KW"/>
</dbReference>
<dbReference type="GO" id="GO:0009098">
    <property type="term" value="P:L-leucine biosynthetic process"/>
    <property type="evidence" value="ECO:0007669"/>
    <property type="project" value="UniProtKB-UniRule"/>
</dbReference>
<dbReference type="CDD" id="cd01583">
    <property type="entry name" value="IPMI"/>
    <property type="match status" value="1"/>
</dbReference>
<dbReference type="FunFam" id="3.30.499.10:FF:000007">
    <property type="entry name" value="3-isopropylmalate dehydratase large subunit"/>
    <property type="match status" value="1"/>
</dbReference>
<dbReference type="Gene3D" id="3.30.499.10">
    <property type="entry name" value="Aconitase, domain 3"/>
    <property type="match status" value="2"/>
</dbReference>
<dbReference type="HAMAP" id="MF_01026">
    <property type="entry name" value="LeuC_type1"/>
    <property type="match status" value="1"/>
</dbReference>
<dbReference type="InterPro" id="IPR004430">
    <property type="entry name" value="3-IsopropMal_deHydase_lsu"/>
</dbReference>
<dbReference type="InterPro" id="IPR015931">
    <property type="entry name" value="Acnase/IPM_dHydase_lsu_aba_1/3"/>
</dbReference>
<dbReference type="InterPro" id="IPR001030">
    <property type="entry name" value="Acoase/IPM_deHydtase_lsu_aba"/>
</dbReference>
<dbReference type="InterPro" id="IPR018136">
    <property type="entry name" value="Aconitase_4Fe-4S_BS"/>
</dbReference>
<dbReference type="InterPro" id="IPR036008">
    <property type="entry name" value="Aconitase_4Fe-4S_dom"/>
</dbReference>
<dbReference type="InterPro" id="IPR050067">
    <property type="entry name" value="IPM_dehydratase_rel_enz"/>
</dbReference>
<dbReference type="InterPro" id="IPR033941">
    <property type="entry name" value="IPMI_cat"/>
</dbReference>
<dbReference type="NCBIfam" id="TIGR00170">
    <property type="entry name" value="leuC"/>
    <property type="match status" value="1"/>
</dbReference>
<dbReference type="NCBIfam" id="NF004016">
    <property type="entry name" value="PRK05478.1"/>
    <property type="match status" value="1"/>
</dbReference>
<dbReference type="NCBIfam" id="NF009116">
    <property type="entry name" value="PRK12466.1"/>
    <property type="match status" value="1"/>
</dbReference>
<dbReference type="PANTHER" id="PTHR43822:SF9">
    <property type="entry name" value="3-ISOPROPYLMALATE DEHYDRATASE"/>
    <property type="match status" value="1"/>
</dbReference>
<dbReference type="PANTHER" id="PTHR43822">
    <property type="entry name" value="HOMOACONITASE, MITOCHONDRIAL-RELATED"/>
    <property type="match status" value="1"/>
</dbReference>
<dbReference type="Pfam" id="PF00330">
    <property type="entry name" value="Aconitase"/>
    <property type="match status" value="1"/>
</dbReference>
<dbReference type="PRINTS" id="PR00415">
    <property type="entry name" value="ACONITASE"/>
</dbReference>
<dbReference type="SUPFAM" id="SSF53732">
    <property type="entry name" value="Aconitase iron-sulfur domain"/>
    <property type="match status" value="1"/>
</dbReference>
<dbReference type="PROSITE" id="PS00450">
    <property type="entry name" value="ACONITASE_1"/>
    <property type="match status" value="1"/>
</dbReference>
<dbReference type="PROSITE" id="PS01244">
    <property type="entry name" value="ACONITASE_2"/>
    <property type="match status" value="1"/>
</dbReference>
<reference key="1">
    <citation type="journal article" date="2009" name="Appl. Environ. Microbiol.">
        <title>Three genomes from the phylum Acidobacteria provide insight into the lifestyles of these microorganisms in soils.</title>
        <authorList>
            <person name="Ward N.L."/>
            <person name="Challacombe J.F."/>
            <person name="Janssen P.H."/>
            <person name="Henrissat B."/>
            <person name="Coutinho P.M."/>
            <person name="Wu M."/>
            <person name="Xie G."/>
            <person name="Haft D.H."/>
            <person name="Sait M."/>
            <person name="Badger J."/>
            <person name="Barabote R.D."/>
            <person name="Bradley B."/>
            <person name="Brettin T.S."/>
            <person name="Brinkac L.M."/>
            <person name="Bruce D."/>
            <person name="Creasy T."/>
            <person name="Daugherty S.C."/>
            <person name="Davidsen T.M."/>
            <person name="DeBoy R.T."/>
            <person name="Detter J.C."/>
            <person name="Dodson R.J."/>
            <person name="Durkin A.S."/>
            <person name="Ganapathy A."/>
            <person name="Gwinn-Giglio M."/>
            <person name="Han C.S."/>
            <person name="Khouri H."/>
            <person name="Kiss H."/>
            <person name="Kothari S.P."/>
            <person name="Madupu R."/>
            <person name="Nelson K.E."/>
            <person name="Nelson W.C."/>
            <person name="Paulsen I."/>
            <person name="Penn K."/>
            <person name="Ren Q."/>
            <person name="Rosovitz M.J."/>
            <person name="Selengut J.D."/>
            <person name="Shrivastava S."/>
            <person name="Sullivan S.A."/>
            <person name="Tapia R."/>
            <person name="Thompson L.S."/>
            <person name="Watkins K.L."/>
            <person name="Yang Q."/>
            <person name="Yu C."/>
            <person name="Zafar N."/>
            <person name="Zhou L."/>
            <person name="Kuske C.R."/>
        </authorList>
    </citation>
    <scope>NUCLEOTIDE SEQUENCE [LARGE SCALE GENOMIC DNA]</scope>
    <source>
        <strain>Ellin345</strain>
    </source>
</reference>
<keyword id="KW-0004">4Fe-4S</keyword>
<keyword id="KW-0028">Amino-acid biosynthesis</keyword>
<keyword id="KW-0100">Branched-chain amino acid biosynthesis</keyword>
<keyword id="KW-0408">Iron</keyword>
<keyword id="KW-0411">Iron-sulfur</keyword>
<keyword id="KW-0432">Leucine biosynthesis</keyword>
<keyword id="KW-0456">Lyase</keyword>
<keyword id="KW-0479">Metal-binding</keyword>
<keyword id="KW-1185">Reference proteome</keyword>
<feature type="chain" id="PRO_0000319805" description="3-isopropylmalate dehydratase large subunit">
    <location>
        <begin position="1"/>
        <end position="470"/>
    </location>
</feature>
<feature type="binding site" evidence="1">
    <location>
        <position position="349"/>
    </location>
    <ligand>
        <name>[4Fe-4S] cluster</name>
        <dbReference type="ChEBI" id="CHEBI:49883"/>
    </ligand>
</feature>
<feature type="binding site" evidence="1">
    <location>
        <position position="409"/>
    </location>
    <ligand>
        <name>[4Fe-4S] cluster</name>
        <dbReference type="ChEBI" id="CHEBI:49883"/>
    </ligand>
</feature>
<feature type="binding site" evidence="1">
    <location>
        <position position="412"/>
    </location>
    <ligand>
        <name>[4Fe-4S] cluster</name>
        <dbReference type="ChEBI" id="CHEBI:49883"/>
    </ligand>
</feature>
<evidence type="ECO:0000255" key="1">
    <source>
        <dbReference type="HAMAP-Rule" id="MF_01026"/>
    </source>
</evidence>
<sequence>MSGPRTLFEKIWSTHVVCVPDDQPPILYIDRHYVHEVTSPQAFDGLRAAGRKVRRTDLTFATVDHNVPTTSPRLVIKDDVAARQIDALRTNCAAFGVPLFDLTSEEQGIVHVIGPELGLTLPGMTIVCGDSHTSTHGAFGAFAFGIGTSEVEHVLATQCLPQRKPKTMKIEVSGTLPEGVTAKDLALGIIGKLGTDGATGHVIEYCGTAIRALSMEARMTLCNMSIEGGARAGLIGPDEITFAYIRNRQYAPKGAEWDTGVAEWAALNTDEGAKFDREIHINAADLQPQVTWGTNPGMVVSVGANVPDPKATSDDAQRQSYERALTYMDLKPGTPVAQIAVDRVFIGSCTNSRIEDLRAAAKVVSGYHVAATVHAMVVPGSQRIKAKAEEEGLDRVFRDAGFEWRESGCSMCLGMNPDILSPGQRCASTSNRNFEGRQGRGGRTHLVSPAMAAAAAITGHFTDIREWEYK</sequence>
<organism>
    <name type="scientific">Koribacter versatilis (strain Ellin345)</name>
    <dbReference type="NCBI Taxonomy" id="204669"/>
    <lineage>
        <taxon>Bacteria</taxon>
        <taxon>Pseudomonadati</taxon>
        <taxon>Acidobacteriota</taxon>
        <taxon>Terriglobia</taxon>
        <taxon>Terriglobales</taxon>
        <taxon>Candidatus Korobacteraceae</taxon>
        <taxon>Candidatus Korobacter</taxon>
    </lineage>
</organism>
<name>LEUC_KORVE</name>
<protein>
    <recommendedName>
        <fullName evidence="1">3-isopropylmalate dehydratase large subunit</fullName>
        <ecNumber evidence="1">4.2.1.33</ecNumber>
    </recommendedName>
    <alternativeName>
        <fullName evidence="1">Alpha-IPM isomerase</fullName>
        <shortName evidence="1">IPMI</shortName>
    </alternativeName>
    <alternativeName>
        <fullName evidence="1">Isopropylmalate isomerase</fullName>
    </alternativeName>
</protein>